<protein>
    <recommendedName>
        <fullName>Uncharacterized protein HI_0082</fullName>
    </recommendedName>
</protein>
<feature type="signal peptide" evidence="1">
    <location>
        <begin position="1"/>
        <end position="22"/>
    </location>
</feature>
<feature type="chain" id="PRO_0000013948" description="Uncharacterized protein HI_0082">
    <location>
        <begin position="23"/>
        <end position="88"/>
    </location>
</feature>
<dbReference type="EMBL" id="L42023">
    <property type="protein sequence ID" value="AAC21761.1"/>
    <property type="molecule type" value="Genomic_DNA"/>
</dbReference>
<dbReference type="PIR" id="I64000">
    <property type="entry name" value="I64000"/>
</dbReference>
<dbReference type="RefSeq" id="NP_438255.1">
    <property type="nucleotide sequence ID" value="NC_000907.1"/>
</dbReference>
<dbReference type="SMR" id="P43937"/>
<dbReference type="STRING" id="71421.HI_0082"/>
<dbReference type="EnsemblBacteria" id="AAC21761">
    <property type="protein sequence ID" value="AAC21761"/>
    <property type="gene ID" value="HI_0082"/>
</dbReference>
<dbReference type="KEGG" id="hin:HI_0082"/>
<dbReference type="PATRIC" id="fig|71421.8.peg.83"/>
<dbReference type="eggNOG" id="COG1960">
    <property type="taxonomic scope" value="Bacteria"/>
</dbReference>
<dbReference type="HOGENOM" id="CLU_2464718_0_0_6"/>
<dbReference type="OrthoDB" id="7316074at2"/>
<dbReference type="BioCyc" id="HINF71421:G1GJ1-83-MONOMER"/>
<dbReference type="Proteomes" id="UP000000579">
    <property type="component" value="Chromosome"/>
</dbReference>
<dbReference type="GO" id="GO:0050660">
    <property type="term" value="F:flavin adenine dinucleotide binding"/>
    <property type="evidence" value="ECO:0007669"/>
    <property type="project" value="InterPro"/>
</dbReference>
<dbReference type="GO" id="GO:0016627">
    <property type="term" value="F:oxidoreductase activity, acting on the CH-CH group of donors"/>
    <property type="evidence" value="ECO:0007669"/>
    <property type="project" value="InterPro"/>
</dbReference>
<dbReference type="Gene3D" id="1.10.540.10">
    <property type="entry name" value="Acyl-CoA dehydrogenase/oxidase, N-terminal domain"/>
    <property type="match status" value="1"/>
</dbReference>
<dbReference type="InterPro" id="IPR037069">
    <property type="entry name" value="AcylCoA_DH/ox_N_sf"/>
</dbReference>
<dbReference type="InterPro" id="IPR009100">
    <property type="entry name" value="AcylCoA_DH/oxidase_NM_dom_sf"/>
</dbReference>
<dbReference type="SUPFAM" id="SSF56645">
    <property type="entry name" value="Acyl-CoA dehydrogenase NM domain-like"/>
    <property type="match status" value="1"/>
</dbReference>
<name>Y082_HAEIN</name>
<reference key="1">
    <citation type="journal article" date="1995" name="Science">
        <title>Whole-genome random sequencing and assembly of Haemophilus influenzae Rd.</title>
        <authorList>
            <person name="Fleischmann R.D."/>
            <person name="Adams M.D."/>
            <person name="White O."/>
            <person name="Clayton R.A."/>
            <person name="Kirkness E.F."/>
            <person name="Kerlavage A.R."/>
            <person name="Bult C.J."/>
            <person name="Tomb J.-F."/>
            <person name="Dougherty B.A."/>
            <person name="Merrick J.M."/>
            <person name="McKenney K."/>
            <person name="Sutton G.G."/>
            <person name="FitzHugh W."/>
            <person name="Fields C.A."/>
            <person name="Gocayne J.D."/>
            <person name="Scott J.D."/>
            <person name="Shirley R."/>
            <person name="Liu L.-I."/>
            <person name="Glodek A."/>
            <person name="Kelley J.M."/>
            <person name="Weidman J.F."/>
            <person name="Phillips C.A."/>
            <person name="Spriggs T."/>
            <person name="Hedblom E."/>
            <person name="Cotton M.D."/>
            <person name="Utterback T.R."/>
            <person name="Hanna M.C."/>
            <person name="Nguyen D.T."/>
            <person name="Saudek D.M."/>
            <person name="Brandon R.C."/>
            <person name="Fine L.D."/>
            <person name="Fritchman J.L."/>
            <person name="Fuhrmann J.L."/>
            <person name="Geoghagen N.S.M."/>
            <person name="Gnehm C.L."/>
            <person name="McDonald L.A."/>
            <person name="Small K.V."/>
            <person name="Fraser C.M."/>
            <person name="Smith H.O."/>
            <person name="Venter J.C."/>
        </authorList>
    </citation>
    <scope>NUCLEOTIDE SEQUENCE [LARGE SCALE GENOMIC DNA]</scope>
    <source>
        <strain>ATCC 51907 / DSM 11121 / KW20 / Rd</strain>
    </source>
</reference>
<accession>P43937</accession>
<sequence>MGLTLKEHAEVCMALAESSASAGLCYMMSNVAVNCLNLFGSYQLKQKIFSDIVQNKTFAALAYSELGTGTHFYSSFYINMAWNLVKIM</sequence>
<organism>
    <name type="scientific">Haemophilus influenzae (strain ATCC 51907 / DSM 11121 / KW20 / Rd)</name>
    <dbReference type="NCBI Taxonomy" id="71421"/>
    <lineage>
        <taxon>Bacteria</taxon>
        <taxon>Pseudomonadati</taxon>
        <taxon>Pseudomonadota</taxon>
        <taxon>Gammaproteobacteria</taxon>
        <taxon>Pasteurellales</taxon>
        <taxon>Pasteurellaceae</taxon>
        <taxon>Haemophilus</taxon>
    </lineage>
</organism>
<evidence type="ECO:0000255" key="1"/>
<keyword id="KW-1185">Reference proteome</keyword>
<keyword id="KW-0732">Signal</keyword>
<proteinExistence type="inferred from homology"/>
<gene>
    <name type="ordered locus">HI_0082</name>
</gene>